<feature type="chain" id="PRO_0000095633" description="RNA-binding protein Hfq">
    <location>
        <begin position="1"/>
        <end position="82"/>
    </location>
</feature>
<feature type="domain" description="Sm" evidence="2">
    <location>
        <begin position="11"/>
        <end position="71"/>
    </location>
</feature>
<feature type="helix" evidence="3">
    <location>
        <begin position="9"/>
        <end position="19"/>
    </location>
</feature>
<feature type="strand" evidence="3">
    <location>
        <begin position="24"/>
        <end position="28"/>
    </location>
</feature>
<feature type="strand" evidence="3">
    <location>
        <begin position="33"/>
        <end position="41"/>
    </location>
</feature>
<feature type="strand" evidence="3">
    <location>
        <begin position="43"/>
        <end position="50"/>
    </location>
</feature>
<feature type="strand" evidence="3">
    <location>
        <begin position="53"/>
        <end position="58"/>
    </location>
</feature>
<feature type="helix" evidence="3">
    <location>
        <begin position="59"/>
        <end position="61"/>
    </location>
</feature>
<feature type="strand" evidence="3">
    <location>
        <begin position="62"/>
        <end position="67"/>
    </location>
</feature>
<dbReference type="EMBL" id="AE005673">
    <property type="protein sequence ID" value="AAK23721.1"/>
    <property type="molecule type" value="Genomic_DNA"/>
</dbReference>
<dbReference type="PIR" id="E87465">
    <property type="entry name" value="E87465"/>
</dbReference>
<dbReference type="RefSeq" id="NP_420553.1">
    <property type="nucleotide sequence ID" value="NC_002696.2"/>
</dbReference>
<dbReference type="RefSeq" id="WP_010919613.1">
    <property type="nucleotide sequence ID" value="NC_002696.2"/>
</dbReference>
<dbReference type="PDB" id="6GWK">
    <property type="method" value="X-ray"/>
    <property type="resolution" value="2.15 A"/>
    <property type="chains" value="A/B/C/D/E/F/G/H/I/J/K/L/M/N/O/P/Q/R/S/T/U/V/W/X=1-82"/>
</dbReference>
<dbReference type="PDBsum" id="6GWK"/>
<dbReference type="SMR" id="Q9A7H8"/>
<dbReference type="STRING" id="190650.CC_1745"/>
<dbReference type="EnsemblBacteria" id="AAK23721">
    <property type="protein sequence ID" value="AAK23721"/>
    <property type="gene ID" value="CC_1745"/>
</dbReference>
<dbReference type="KEGG" id="ccr:CC_1745"/>
<dbReference type="PATRIC" id="fig|190650.5.peg.1769"/>
<dbReference type="eggNOG" id="COG1923">
    <property type="taxonomic scope" value="Bacteria"/>
</dbReference>
<dbReference type="HOGENOM" id="CLU_113688_0_0_5"/>
<dbReference type="BioCyc" id="CAULO:CC1745-MONOMER"/>
<dbReference type="CD-CODE" id="EF55C906">
    <property type="entry name" value="BR-bodies"/>
</dbReference>
<dbReference type="Proteomes" id="UP000001816">
    <property type="component" value="Chromosome"/>
</dbReference>
<dbReference type="GO" id="GO:0005829">
    <property type="term" value="C:cytosol"/>
    <property type="evidence" value="ECO:0007669"/>
    <property type="project" value="TreeGrafter"/>
</dbReference>
<dbReference type="GO" id="GO:0003723">
    <property type="term" value="F:RNA binding"/>
    <property type="evidence" value="ECO:0007669"/>
    <property type="project" value="UniProtKB-UniRule"/>
</dbReference>
<dbReference type="GO" id="GO:0006355">
    <property type="term" value="P:regulation of DNA-templated transcription"/>
    <property type="evidence" value="ECO:0007669"/>
    <property type="project" value="InterPro"/>
</dbReference>
<dbReference type="GO" id="GO:0043487">
    <property type="term" value="P:regulation of RNA stability"/>
    <property type="evidence" value="ECO:0007669"/>
    <property type="project" value="TreeGrafter"/>
</dbReference>
<dbReference type="GO" id="GO:0045974">
    <property type="term" value="P:regulation of translation, ncRNA-mediated"/>
    <property type="evidence" value="ECO:0007669"/>
    <property type="project" value="TreeGrafter"/>
</dbReference>
<dbReference type="CDD" id="cd01716">
    <property type="entry name" value="Hfq"/>
    <property type="match status" value="1"/>
</dbReference>
<dbReference type="FunFam" id="2.30.30.100:FF:000001">
    <property type="entry name" value="RNA-binding protein Hfq"/>
    <property type="match status" value="1"/>
</dbReference>
<dbReference type="Gene3D" id="2.30.30.100">
    <property type="match status" value="1"/>
</dbReference>
<dbReference type="HAMAP" id="MF_00436">
    <property type="entry name" value="Hfq"/>
    <property type="match status" value="1"/>
</dbReference>
<dbReference type="InterPro" id="IPR005001">
    <property type="entry name" value="Hfq"/>
</dbReference>
<dbReference type="InterPro" id="IPR010920">
    <property type="entry name" value="LSM_dom_sf"/>
</dbReference>
<dbReference type="InterPro" id="IPR047575">
    <property type="entry name" value="Sm"/>
</dbReference>
<dbReference type="NCBIfam" id="TIGR02383">
    <property type="entry name" value="Hfq"/>
    <property type="match status" value="1"/>
</dbReference>
<dbReference type="NCBIfam" id="NF001602">
    <property type="entry name" value="PRK00395.1"/>
    <property type="match status" value="1"/>
</dbReference>
<dbReference type="PANTHER" id="PTHR34772">
    <property type="entry name" value="RNA-BINDING PROTEIN HFQ"/>
    <property type="match status" value="1"/>
</dbReference>
<dbReference type="PANTHER" id="PTHR34772:SF1">
    <property type="entry name" value="RNA-BINDING PROTEIN HFQ"/>
    <property type="match status" value="1"/>
</dbReference>
<dbReference type="Pfam" id="PF17209">
    <property type="entry name" value="Hfq"/>
    <property type="match status" value="1"/>
</dbReference>
<dbReference type="SUPFAM" id="SSF50182">
    <property type="entry name" value="Sm-like ribonucleoproteins"/>
    <property type="match status" value="1"/>
</dbReference>
<dbReference type="PROSITE" id="PS52002">
    <property type="entry name" value="SM"/>
    <property type="match status" value="1"/>
</dbReference>
<accession>Q9A7H8</accession>
<proteinExistence type="evidence at protein level"/>
<name>HFQ_CAUVC</name>
<gene>
    <name evidence="1" type="primary">hfq</name>
    <name type="ordered locus">CC_1745</name>
</gene>
<organism>
    <name type="scientific">Caulobacter vibrioides (strain ATCC 19089 / CIP 103742 / CB 15)</name>
    <name type="common">Caulobacter crescentus</name>
    <dbReference type="NCBI Taxonomy" id="190650"/>
    <lineage>
        <taxon>Bacteria</taxon>
        <taxon>Pseudomonadati</taxon>
        <taxon>Pseudomonadota</taxon>
        <taxon>Alphaproteobacteria</taxon>
        <taxon>Caulobacterales</taxon>
        <taxon>Caulobacteraceae</taxon>
        <taxon>Caulobacter</taxon>
    </lineage>
</organism>
<protein>
    <recommendedName>
        <fullName evidence="1">RNA-binding protein Hfq</fullName>
    </recommendedName>
</protein>
<evidence type="ECO:0000255" key="1">
    <source>
        <dbReference type="HAMAP-Rule" id="MF_00436"/>
    </source>
</evidence>
<evidence type="ECO:0000255" key="2">
    <source>
        <dbReference type="PROSITE-ProRule" id="PRU01346"/>
    </source>
</evidence>
<evidence type="ECO:0007829" key="3">
    <source>
        <dbReference type="PDB" id="6GWK"/>
    </source>
</evidence>
<comment type="function">
    <text evidence="1">RNA chaperone that binds small regulatory RNA (sRNAs) and mRNAs to facilitate mRNA translational regulation in response to envelope stress, environmental stress and changes in metabolite concentrations. Also binds with high specificity to tRNAs.</text>
</comment>
<comment type="subunit">
    <text evidence="1">Homohexamer.</text>
</comment>
<comment type="similarity">
    <text evidence="1">Belongs to the Hfq family.</text>
</comment>
<keyword id="KW-0002">3D-structure</keyword>
<keyword id="KW-1185">Reference proteome</keyword>
<keyword id="KW-0694">RNA-binding</keyword>
<keyword id="KW-0346">Stress response</keyword>
<reference key="1">
    <citation type="journal article" date="2001" name="Proc. Natl. Acad. Sci. U.S.A.">
        <title>Complete genome sequence of Caulobacter crescentus.</title>
        <authorList>
            <person name="Nierman W.C."/>
            <person name="Feldblyum T.V."/>
            <person name="Laub M.T."/>
            <person name="Paulsen I.T."/>
            <person name="Nelson K.E."/>
            <person name="Eisen J.A."/>
            <person name="Heidelberg J.F."/>
            <person name="Alley M.R.K."/>
            <person name="Ohta N."/>
            <person name="Maddock J.R."/>
            <person name="Potocka I."/>
            <person name="Nelson W.C."/>
            <person name="Newton A."/>
            <person name="Stephens C."/>
            <person name="Phadke N.D."/>
            <person name="Ely B."/>
            <person name="DeBoy R.T."/>
            <person name="Dodson R.J."/>
            <person name="Durkin A.S."/>
            <person name="Gwinn M.L."/>
            <person name="Haft D.H."/>
            <person name="Kolonay J.F."/>
            <person name="Smit J."/>
            <person name="Craven M.B."/>
            <person name="Khouri H.M."/>
            <person name="Shetty J."/>
            <person name="Berry K.J."/>
            <person name="Utterback T.R."/>
            <person name="Tran K."/>
            <person name="Wolf A.M."/>
            <person name="Vamathevan J.J."/>
            <person name="Ermolaeva M.D."/>
            <person name="White O."/>
            <person name="Salzberg S.L."/>
            <person name="Venter J.C."/>
            <person name="Shapiro L."/>
            <person name="Fraser C.M."/>
        </authorList>
    </citation>
    <scope>NUCLEOTIDE SEQUENCE [LARGE SCALE GENOMIC DNA]</scope>
    <source>
        <strain>ATCC 19089 / CIP 103742 / CB 15</strain>
    </source>
</reference>
<sequence>MSAEKKQNLQDTFLNSVRKSKTPLTIFLVNGVKLQGVVSWFDNFCVLLRRDGQSQLVYKHAISTIMPAQPVQLYEPSADADD</sequence>